<reference key="1">
    <citation type="journal article" date="2016" name="Stand. Genomic Sci.">
        <title>Complete genome sequence of the Antarctic Halorubrum lacusprofundi type strain ACAM 34.</title>
        <authorList>
            <person name="Anderson I.J."/>
            <person name="DasSarma P."/>
            <person name="Lucas S."/>
            <person name="Copeland A."/>
            <person name="Lapidus A."/>
            <person name="Del Rio T.G."/>
            <person name="Tice H."/>
            <person name="Dalin E."/>
            <person name="Bruce D.C."/>
            <person name="Goodwin L."/>
            <person name="Pitluck S."/>
            <person name="Sims D."/>
            <person name="Brettin T.S."/>
            <person name="Detter J.C."/>
            <person name="Han C.S."/>
            <person name="Larimer F."/>
            <person name="Hauser L."/>
            <person name="Land M."/>
            <person name="Ivanova N."/>
            <person name="Richardson P."/>
            <person name="Cavicchioli R."/>
            <person name="DasSarma S."/>
            <person name="Woese C.R."/>
            <person name="Kyrpides N.C."/>
        </authorList>
    </citation>
    <scope>NUCLEOTIDE SEQUENCE [LARGE SCALE GENOMIC DNA]</scope>
    <source>
        <strain>ATCC 49239 / DSM 5036 / JCM 8891 / ACAM 34</strain>
    </source>
</reference>
<comment type="function">
    <text evidence="1">Catalytic subunit of DNA primase, an RNA polymerase that catalyzes the synthesis of short RNA molecules used as primers for DNA polymerase during DNA replication. The small subunit contains the primase catalytic core and has DNA synthesis activity on its own. Binding to the large subunit stabilizes and modulates the activity, increasing the rate of DNA synthesis while decreasing the length of the DNA fragments, and conferring RNA synthesis capability. The DNA polymerase activity may enable DNA primase to also catalyze primer extension after primer synthesis. May also play a role in DNA repair.</text>
</comment>
<comment type="cofactor">
    <cofactor evidence="1">
        <name>Mg(2+)</name>
        <dbReference type="ChEBI" id="CHEBI:18420"/>
    </cofactor>
    <cofactor evidence="1">
        <name>Mn(2+)</name>
        <dbReference type="ChEBI" id="CHEBI:29035"/>
    </cofactor>
</comment>
<comment type="subunit">
    <text evidence="1">Heterodimer of a small subunit (PriS) and a large subunit (PriL).</text>
</comment>
<comment type="similarity">
    <text evidence="1">Belongs to the eukaryotic-type primase small subunit family.</text>
</comment>
<proteinExistence type="inferred from homology"/>
<evidence type="ECO:0000255" key="1">
    <source>
        <dbReference type="HAMAP-Rule" id="MF_00700"/>
    </source>
</evidence>
<name>PRIS_HALLT</name>
<feature type="chain" id="PRO_1000192551" description="DNA primase small subunit PriS">
    <location>
        <begin position="1"/>
        <end position="387"/>
    </location>
</feature>
<feature type="active site" evidence="1">
    <location>
        <position position="98"/>
    </location>
</feature>
<feature type="active site" evidence="1">
    <location>
        <position position="100"/>
    </location>
</feature>
<feature type="active site" evidence="1">
    <location>
        <position position="289"/>
    </location>
</feature>
<accession>B9LPT9</accession>
<dbReference type="EC" id="2.7.7.-" evidence="1"/>
<dbReference type="EMBL" id="CP001365">
    <property type="protein sequence ID" value="ACM57377.1"/>
    <property type="molecule type" value="Genomic_DNA"/>
</dbReference>
<dbReference type="RefSeq" id="WP_015910513.1">
    <property type="nucleotide sequence ID" value="NC_012029.1"/>
</dbReference>
<dbReference type="SMR" id="B9LPT9"/>
<dbReference type="GeneID" id="7399671"/>
<dbReference type="KEGG" id="hla:Hlac_1798"/>
<dbReference type="eggNOG" id="arCOG04110">
    <property type="taxonomic scope" value="Archaea"/>
</dbReference>
<dbReference type="HOGENOM" id="CLU_056123_1_0_2"/>
<dbReference type="Proteomes" id="UP000000740">
    <property type="component" value="Chromosome 1"/>
</dbReference>
<dbReference type="GO" id="GO:0000428">
    <property type="term" value="C:DNA-directed RNA polymerase complex"/>
    <property type="evidence" value="ECO:0007669"/>
    <property type="project" value="UniProtKB-KW"/>
</dbReference>
<dbReference type="GO" id="GO:1990077">
    <property type="term" value="C:primosome complex"/>
    <property type="evidence" value="ECO:0007669"/>
    <property type="project" value="UniProtKB-KW"/>
</dbReference>
<dbReference type="GO" id="GO:0003899">
    <property type="term" value="F:DNA-directed RNA polymerase activity"/>
    <property type="evidence" value="ECO:0007669"/>
    <property type="project" value="InterPro"/>
</dbReference>
<dbReference type="GO" id="GO:0046872">
    <property type="term" value="F:metal ion binding"/>
    <property type="evidence" value="ECO:0007669"/>
    <property type="project" value="UniProtKB-KW"/>
</dbReference>
<dbReference type="GO" id="GO:0006269">
    <property type="term" value="P:DNA replication, synthesis of primer"/>
    <property type="evidence" value="ECO:0007669"/>
    <property type="project" value="UniProtKB-UniRule"/>
</dbReference>
<dbReference type="CDD" id="cd04860">
    <property type="entry name" value="AE_Prim_S"/>
    <property type="match status" value="1"/>
</dbReference>
<dbReference type="Gene3D" id="3.90.920.10">
    <property type="entry name" value="DNA primase, PRIM domain"/>
    <property type="match status" value="1"/>
</dbReference>
<dbReference type="HAMAP" id="MF_00700">
    <property type="entry name" value="DNA_primase_sml_arc"/>
    <property type="match status" value="1"/>
</dbReference>
<dbReference type="InterPro" id="IPR002755">
    <property type="entry name" value="DNA_primase_S"/>
</dbReference>
<dbReference type="InterPro" id="IPR014052">
    <property type="entry name" value="DNA_primase_ssu_euk/arc"/>
</dbReference>
<dbReference type="InterPro" id="IPR023639">
    <property type="entry name" value="DNA_primase_ssu_PriS"/>
</dbReference>
<dbReference type="NCBIfam" id="TIGR00335">
    <property type="entry name" value="primase_sml"/>
    <property type="match status" value="1"/>
</dbReference>
<dbReference type="NCBIfam" id="NF001639">
    <property type="entry name" value="PRK00419.1-1"/>
    <property type="match status" value="1"/>
</dbReference>
<dbReference type="PANTHER" id="PTHR10536">
    <property type="entry name" value="DNA PRIMASE SMALL SUBUNIT"/>
    <property type="match status" value="1"/>
</dbReference>
<dbReference type="Pfam" id="PF01896">
    <property type="entry name" value="DNA_primase_S"/>
    <property type="match status" value="1"/>
</dbReference>
<dbReference type="SUPFAM" id="SSF56747">
    <property type="entry name" value="Prim-pol domain"/>
    <property type="match status" value="1"/>
</dbReference>
<keyword id="KW-0235">DNA replication</keyword>
<keyword id="KW-0240">DNA-directed RNA polymerase</keyword>
<keyword id="KW-0460">Magnesium</keyword>
<keyword id="KW-0464">Manganese</keyword>
<keyword id="KW-0479">Metal-binding</keyword>
<keyword id="KW-0548">Nucleotidyltransferase</keyword>
<keyword id="KW-0639">Primosome</keyword>
<keyword id="KW-1185">Reference proteome</keyword>
<keyword id="KW-0804">Transcription</keyword>
<keyword id="KW-0808">Transferase</keyword>
<sequence>MDDRTREYLKGRFGDYYRRASPALPPDANLREWGHIPWTPGSGTTMLRHQSLYDLGDVDTFFADNAPRHAYFSAARYDDPGASTMSQKGWRSADLVFDLDADHLPGVDPDATSYPEMLAECKQALLRLLDFLEDDFSFDDLTVVFSGGRGYHVHVRDESVRELDSEARREVVDYVRAIDLDTEGLIRTVSERGTTKRVLRTEGGWGARVHEALIEYADDLREMDAEDARERLMELDGIGEGRAETILGAFDRNPTAVREGNVEAGGPGVRRLVSALAARVTATDTAPIDEPVTTDTRRLIRLPRTLHGGSGLVVTPIDRDDLDAFDPLRDAVPDRFVGREIRIETDVDRTVELNGERVRVEPGRNTVPEFAGVFLMARGEARKAPER</sequence>
<organism>
    <name type="scientific">Halorubrum lacusprofundi (strain ATCC 49239 / DSM 5036 / JCM 8891 / ACAM 34)</name>
    <dbReference type="NCBI Taxonomy" id="416348"/>
    <lineage>
        <taxon>Archaea</taxon>
        <taxon>Methanobacteriati</taxon>
        <taxon>Methanobacteriota</taxon>
        <taxon>Stenosarchaea group</taxon>
        <taxon>Halobacteria</taxon>
        <taxon>Halobacteriales</taxon>
        <taxon>Haloferacaceae</taxon>
        <taxon>Halorubrum</taxon>
    </lineage>
</organism>
<protein>
    <recommendedName>
        <fullName evidence="1">DNA primase small subunit PriS</fullName>
        <ecNumber evidence="1">2.7.7.-</ecNumber>
    </recommendedName>
</protein>
<gene>
    <name evidence="1" type="primary">priS</name>
    <name type="synonym">priA</name>
    <name type="ordered locus">Hlac_1798</name>
</gene>